<dbReference type="EMBL" id="AF482429">
    <property type="protein sequence ID" value="AAO39268.1"/>
    <property type="molecule type" value="mRNA"/>
</dbReference>
<dbReference type="EMBL" id="AY166680">
    <property type="protein sequence ID" value="AAO22237.1"/>
    <property type="status" value="ALT_INIT"/>
    <property type="molecule type" value="mRNA"/>
</dbReference>
<dbReference type="EMBL" id="AK098568">
    <property type="protein sequence ID" value="BAC05337.1"/>
    <property type="molecule type" value="mRNA"/>
</dbReference>
<dbReference type="EMBL" id="AK302656">
    <property type="protein sequence ID" value="BAH13770.1"/>
    <property type="molecule type" value="mRNA"/>
</dbReference>
<dbReference type="EMBL" id="AK302680">
    <property type="protein sequence ID" value="BAG63912.1"/>
    <property type="molecule type" value="mRNA"/>
</dbReference>
<dbReference type="EMBL" id="AC021822">
    <property type="status" value="NOT_ANNOTATED_CDS"/>
    <property type="molecule type" value="Genomic_DNA"/>
</dbReference>
<dbReference type="EMBL" id="AC025678">
    <property type="status" value="NOT_ANNOTATED_CDS"/>
    <property type="molecule type" value="Genomic_DNA"/>
</dbReference>
<dbReference type="EMBL" id="CH471125">
    <property type="protein sequence ID" value="EAW92304.1"/>
    <property type="molecule type" value="Genomic_DNA"/>
</dbReference>
<dbReference type="EMBL" id="BC114518">
    <property type="protein sequence ID" value="AAI14519.1"/>
    <property type="molecule type" value="mRNA"/>
</dbReference>
<dbReference type="EMBL" id="BC114567">
    <property type="protein sequence ID" value="AAI14568.1"/>
    <property type="molecule type" value="mRNA"/>
</dbReference>
<dbReference type="EMBL" id="AL137416">
    <property type="protein sequence ID" value="CAB70729.1"/>
    <property type="molecule type" value="mRNA"/>
</dbReference>
<dbReference type="CCDS" id="CCDS32190.1">
    <molecule id="Q86Y26-1"/>
</dbReference>
<dbReference type="CCDS" id="CCDS61584.1">
    <molecule id="Q86Y26-3"/>
</dbReference>
<dbReference type="CCDS" id="CCDS61585.1">
    <molecule id="Q86Y26-4"/>
</dbReference>
<dbReference type="PIR" id="T46461">
    <property type="entry name" value="T46461"/>
</dbReference>
<dbReference type="RefSeq" id="NP_001271221.2">
    <molecule id="Q86Y26-4"/>
    <property type="nucleotide sequence ID" value="NM_001284292.2"/>
</dbReference>
<dbReference type="RefSeq" id="NP_001271222.2">
    <molecule id="Q86Y26-3"/>
    <property type="nucleotide sequence ID" value="NM_001284293.2"/>
</dbReference>
<dbReference type="RefSeq" id="NP_786883.2">
    <molecule id="Q86Y26-1"/>
    <property type="nucleotide sequence ID" value="NM_175741.3"/>
</dbReference>
<dbReference type="RefSeq" id="XP_047288297.1">
    <molecule id="Q86Y26-1"/>
    <property type="nucleotide sequence ID" value="XM_047432341.1"/>
</dbReference>
<dbReference type="PDB" id="7XEZ">
    <property type="method" value="NMR"/>
    <property type="chains" value="A=419-470"/>
</dbReference>
<dbReference type="PDB" id="7XFG">
    <property type="method" value="NMR"/>
    <property type="chains" value="B=403-418"/>
</dbReference>
<dbReference type="PDBsum" id="7XEZ"/>
<dbReference type="PDBsum" id="7XFG"/>
<dbReference type="SMR" id="Q86Y26"/>
<dbReference type="BioGRID" id="129174">
    <property type="interactions" value="57"/>
</dbReference>
<dbReference type="FunCoup" id="Q86Y26">
    <property type="interactions" value="24"/>
</dbReference>
<dbReference type="IntAct" id="Q86Y26">
    <property type="interactions" value="25"/>
</dbReference>
<dbReference type="MINT" id="Q86Y26"/>
<dbReference type="STRING" id="9606.ENSP00000444896"/>
<dbReference type="GlyGen" id="Q86Y26">
    <property type="glycosylation" value="3 sites, 1 O-linked glycan (1 site)"/>
</dbReference>
<dbReference type="iPTMnet" id="Q86Y26"/>
<dbReference type="PhosphoSitePlus" id="Q86Y26"/>
<dbReference type="BioMuta" id="NUTM1"/>
<dbReference type="DMDM" id="311033405"/>
<dbReference type="jPOST" id="Q86Y26"/>
<dbReference type="MassIVE" id="Q86Y26"/>
<dbReference type="PaxDb" id="9606-ENSP00000444896"/>
<dbReference type="PeptideAtlas" id="Q86Y26"/>
<dbReference type="Antibodypedia" id="41965">
    <property type="antibodies" value="137 antibodies from 20 providers"/>
</dbReference>
<dbReference type="DNASU" id="256646"/>
<dbReference type="Ensembl" id="ENST00000333756.5">
    <molecule id="Q86Y26-1"/>
    <property type="protein sequence ID" value="ENSP00000329448.4"/>
    <property type="gene ID" value="ENSG00000184507.17"/>
</dbReference>
<dbReference type="Ensembl" id="ENST00000438749.7">
    <molecule id="Q86Y26-3"/>
    <property type="protein sequence ID" value="ENSP00000407031.3"/>
    <property type="gene ID" value="ENSG00000184507.17"/>
</dbReference>
<dbReference type="Ensembl" id="ENST00000537011.6">
    <molecule id="Q86Y26-4"/>
    <property type="protein sequence ID" value="ENSP00000444896.1"/>
    <property type="gene ID" value="ENSG00000184507.17"/>
</dbReference>
<dbReference type="GeneID" id="256646"/>
<dbReference type="KEGG" id="hsa:256646"/>
<dbReference type="MANE-Select" id="ENST00000537011.6">
    <molecule id="Q86Y26-4"/>
    <property type="protein sequence ID" value="ENSP00000444896.1"/>
    <property type="RefSeq nucleotide sequence ID" value="NM_001284292.2"/>
    <property type="RefSeq protein sequence ID" value="NP_001271221.2"/>
</dbReference>
<dbReference type="UCSC" id="uc001zif.4">
    <molecule id="Q86Y26-1"/>
    <property type="organism name" value="human"/>
</dbReference>
<dbReference type="AGR" id="HGNC:29919"/>
<dbReference type="CTD" id="256646"/>
<dbReference type="DisGeNET" id="256646"/>
<dbReference type="GeneCards" id="NUTM1"/>
<dbReference type="HGNC" id="HGNC:29919">
    <property type="gene designation" value="NUTM1"/>
</dbReference>
<dbReference type="HPA" id="ENSG00000184507">
    <property type="expression patterns" value="Tissue enriched (testis)"/>
</dbReference>
<dbReference type="MalaCards" id="NUTM1"/>
<dbReference type="MIM" id="608963">
    <property type="type" value="gene"/>
</dbReference>
<dbReference type="neXtProt" id="NX_Q86Y26"/>
<dbReference type="OpenTargets" id="ENSG00000184507"/>
<dbReference type="Orphanet" id="443167">
    <property type="disease" value="NUT midline carcinoma"/>
</dbReference>
<dbReference type="PharmGKB" id="PA162378206"/>
<dbReference type="VEuPathDB" id="HostDB:ENSG00000184507"/>
<dbReference type="eggNOG" id="ENOG502RSZ6">
    <property type="taxonomic scope" value="Eukaryota"/>
</dbReference>
<dbReference type="GeneTree" id="ENSGT00410000025793"/>
<dbReference type="HOGENOM" id="CLU_009264_0_0_1"/>
<dbReference type="InParanoid" id="Q86Y26"/>
<dbReference type="OMA" id="PGPDCLI"/>
<dbReference type="OrthoDB" id="9836538at2759"/>
<dbReference type="PAN-GO" id="Q86Y26">
    <property type="GO annotations" value="0 GO annotations based on evolutionary models"/>
</dbReference>
<dbReference type="PhylomeDB" id="Q86Y26"/>
<dbReference type="TreeFam" id="TF337728"/>
<dbReference type="PathwayCommons" id="Q86Y26"/>
<dbReference type="SignaLink" id="Q86Y26"/>
<dbReference type="BioGRID-ORCS" id="256646">
    <property type="hits" value="13 hits in 1142 CRISPR screens"/>
</dbReference>
<dbReference type="ChiTaRS" id="NUTM1">
    <property type="organism name" value="human"/>
</dbReference>
<dbReference type="GenomeRNAi" id="256646"/>
<dbReference type="Pharos" id="Q86Y26">
    <property type="development level" value="Tbio"/>
</dbReference>
<dbReference type="PRO" id="PR:Q86Y26"/>
<dbReference type="Proteomes" id="UP000005640">
    <property type="component" value="Chromosome 15"/>
</dbReference>
<dbReference type="RNAct" id="Q86Y26">
    <property type="molecule type" value="protein"/>
</dbReference>
<dbReference type="Bgee" id="ENSG00000184507">
    <property type="expression patterns" value="Expressed in right testis and 28 other cell types or tissues"/>
</dbReference>
<dbReference type="GO" id="GO:0005737">
    <property type="term" value="C:cytoplasm"/>
    <property type="evidence" value="ECO:0007669"/>
    <property type="project" value="UniProtKB-SubCell"/>
</dbReference>
<dbReference type="GO" id="GO:0005634">
    <property type="term" value="C:nucleus"/>
    <property type="evidence" value="ECO:0007669"/>
    <property type="project" value="UniProtKB-SubCell"/>
</dbReference>
<dbReference type="InterPro" id="IPR024310">
    <property type="entry name" value="NUT"/>
</dbReference>
<dbReference type="InterPro" id="IPR024309">
    <property type="entry name" value="NUT_N"/>
</dbReference>
<dbReference type="PANTHER" id="PTHR22879">
    <property type="entry name" value="NUT FAMILY MEMBER 1"/>
    <property type="match status" value="1"/>
</dbReference>
<dbReference type="PANTHER" id="PTHR22879:SF13">
    <property type="entry name" value="NUT FAMILY MEMBER 1"/>
    <property type="match status" value="1"/>
</dbReference>
<dbReference type="Pfam" id="PF12881">
    <property type="entry name" value="NUT"/>
    <property type="match status" value="2"/>
</dbReference>
<protein>
    <recommendedName>
        <fullName evidence="10">NUT family member 1</fullName>
    </recommendedName>
    <alternativeName>
        <fullName>Nuclear protein in testis</fullName>
    </alternativeName>
</protein>
<gene>
    <name evidence="12" type="primary">NUTM1</name>
    <name type="synonym">C15orf55</name>
    <name type="synonym">NUT</name>
</gene>
<sequence>MASDGASALPGPDMSMKPSAAPSPSPALPFLPPTSDPPDHPPREPPPQPIMPSVFSPDNPLMLSAFPSSLLVTGDGGPCLSGAGAGKVIVKVKTEGGSAEPSQTQNFILTQTALNSTAPGTPCGGLEGPAPPFVTASNVKTILPSKAVGVSQEGPPGLPPQPPPPVAQLVPIVPLEKAWPGPHGTTGEGGPVATLSKPSLGDRSKISKDVYENFRQWQRYKALARRHLSQSPDTEALSCFLIPVLRSLARLKPTMTLEEGLPLAVQEWEHTSNFDRMIFYEMAERFMEFEAEEMQIQNTQLMNGSQGLSPATPLKLDPLGPLASEVCQQPVYIPKKAASKTRAPRRRQRKAQRPPAPEAPKEIPPEAVKEYVDIMEWLVGTHLATGESDGKQEEEGQQQEEEGMYPDPGLLSYINELCSQKVFVSKVEAVIHPQFLADLLSPEKQRDPLALIEELEQEEGLTLAQLVQKRLMALEEEEDAEAPPSFSGAQLDSSPSGSVEDEDGDGRLRPSPGLQGAGGAACLGKVSSSGKRAREVHGGQEQALDSPRGMHRDGNTLPSPSSWDLQPELAAPQGTPGPLGVERRGSGKVINQVSLHQDGHLGGAGPPGHCLVADRTSEALPLCWQGGFQPESTPSLDAGLAELAPLQGQGLEKQVLGLQKGQQTGGRGVLPQGKEPLAVPWEGSSGAMWGDDRGTPMAQSYDQNPSPRAAGERDDVCLSPGVWLSSEMDAVGLELPVQIEEVIESFQVEKCVTEYQEGCQGLGSRGNISLGPGETLVPGDTESSVIPCGGTVAAAALEKRNYCSLPGPLRANSPPLRSKENQEQSCETVGHPSDLWAEGCFPLLESGDSTLGSSKETLPPTCQGNLLIMGTEDASSLPEASQEAGSRGNSFSPLLETIEPVNILDVKDDCGLQLRVSEDTCPLNVHSYDPQGEGRVDPDLSKPKNLAPLQESQESYTTGTPKATSSHQGLGSTLPRRGTRNAIVPRETSVSKTHRSADRAKGKEKKKKEAEEEDEELSNFAYLLASKLSLSPREHPLSPHHASGGQGSQRASHLLPAGAKGPSKLPYPVAKSGKRALAGGPAPTEKTPHSGAQLGVPREKPLALGVVRPSQPRKRRCDSFVTGRRKKRRRSQ</sequence>
<organism>
    <name type="scientific">Homo sapiens</name>
    <name type="common">Human</name>
    <dbReference type="NCBI Taxonomy" id="9606"/>
    <lineage>
        <taxon>Eukaryota</taxon>
        <taxon>Metazoa</taxon>
        <taxon>Chordata</taxon>
        <taxon>Craniata</taxon>
        <taxon>Vertebrata</taxon>
        <taxon>Euteleostomi</taxon>
        <taxon>Mammalia</taxon>
        <taxon>Eutheria</taxon>
        <taxon>Euarchontoglires</taxon>
        <taxon>Primates</taxon>
        <taxon>Haplorrhini</taxon>
        <taxon>Catarrhini</taxon>
        <taxon>Hominidae</taxon>
        <taxon>Homo</taxon>
    </lineage>
</organism>
<proteinExistence type="evidence at protein level"/>
<accession>Q86Y26</accession>
<accession>B4DZ00</accession>
<accession>B7Z7Y4</accession>
<accession>E7EVE8</accession>
<accession>F5H4I6</accession>
<accession>Q86YS8</accession>
<accession>Q8N7F2</accession>
<accession>Q9NTB3</accession>
<name>NUTM1_HUMAN</name>
<keyword id="KW-0002">3D-structure</keyword>
<keyword id="KW-0025">Alternative splicing</keyword>
<keyword id="KW-0160">Chromosomal rearrangement</keyword>
<keyword id="KW-0963">Cytoplasm</keyword>
<keyword id="KW-0488">Methylation</keyword>
<keyword id="KW-0539">Nucleus</keyword>
<keyword id="KW-0597">Phosphoprotein</keyword>
<keyword id="KW-1267">Proteomics identification</keyword>
<keyword id="KW-1185">Reference proteome</keyword>
<reference key="1">
    <citation type="journal article" date="2003" name="Cancer Res.">
        <title>BRD4-NUT fusion oncogene: a novel mechanism in aggressive carcinoma.</title>
        <authorList>
            <person name="French C.A."/>
            <person name="Miyoshi I."/>
            <person name="Kubonishi I."/>
            <person name="Grier H.E."/>
            <person name="Perez-Atayde A.R."/>
            <person name="Fletcher J.A."/>
        </authorList>
    </citation>
    <scope>NUCLEOTIDE SEQUENCE [MRNA] (ISOFORM 1)</scope>
    <scope>DISEASE</scope>
    <scope>CHROMOSOMAL TRANSLOCATION WITH BRD4</scope>
    <scope>TISSUE SPECIFICITY</scope>
    <scope>VARIANT LEU-22</scope>
    <source>
        <tissue>Carcinoma</tissue>
        <tissue>Testis</tissue>
    </source>
</reference>
<reference key="2">
    <citation type="journal article" date="2004" name="Nat. Genet.">
        <title>Complete sequencing and characterization of 21,243 full-length human cDNAs.</title>
        <authorList>
            <person name="Ota T."/>
            <person name="Suzuki Y."/>
            <person name="Nishikawa T."/>
            <person name="Otsuki T."/>
            <person name="Sugiyama T."/>
            <person name="Irie R."/>
            <person name="Wakamatsu A."/>
            <person name="Hayashi K."/>
            <person name="Sato H."/>
            <person name="Nagai K."/>
            <person name="Kimura K."/>
            <person name="Makita H."/>
            <person name="Sekine M."/>
            <person name="Obayashi M."/>
            <person name="Nishi T."/>
            <person name="Shibahara T."/>
            <person name="Tanaka T."/>
            <person name="Ishii S."/>
            <person name="Yamamoto J."/>
            <person name="Saito K."/>
            <person name="Kawai Y."/>
            <person name="Isono Y."/>
            <person name="Nakamura Y."/>
            <person name="Nagahari K."/>
            <person name="Murakami K."/>
            <person name="Yasuda T."/>
            <person name="Iwayanagi T."/>
            <person name="Wagatsuma M."/>
            <person name="Shiratori A."/>
            <person name="Sudo H."/>
            <person name="Hosoiri T."/>
            <person name="Kaku Y."/>
            <person name="Kodaira H."/>
            <person name="Kondo H."/>
            <person name="Sugawara M."/>
            <person name="Takahashi M."/>
            <person name="Kanda K."/>
            <person name="Yokoi T."/>
            <person name="Furuya T."/>
            <person name="Kikkawa E."/>
            <person name="Omura Y."/>
            <person name="Abe K."/>
            <person name="Kamihara K."/>
            <person name="Katsuta N."/>
            <person name="Sato K."/>
            <person name="Tanikawa M."/>
            <person name="Yamazaki M."/>
            <person name="Ninomiya K."/>
            <person name="Ishibashi T."/>
            <person name="Yamashita H."/>
            <person name="Murakawa K."/>
            <person name="Fujimori K."/>
            <person name="Tanai H."/>
            <person name="Kimata M."/>
            <person name="Watanabe M."/>
            <person name="Hiraoka S."/>
            <person name="Chiba Y."/>
            <person name="Ishida S."/>
            <person name="Ono Y."/>
            <person name="Takiguchi S."/>
            <person name="Watanabe S."/>
            <person name="Yosida M."/>
            <person name="Hotuta T."/>
            <person name="Kusano J."/>
            <person name="Kanehori K."/>
            <person name="Takahashi-Fujii A."/>
            <person name="Hara H."/>
            <person name="Tanase T.-O."/>
            <person name="Nomura Y."/>
            <person name="Togiya S."/>
            <person name="Komai F."/>
            <person name="Hara R."/>
            <person name="Takeuchi K."/>
            <person name="Arita M."/>
            <person name="Imose N."/>
            <person name="Musashino K."/>
            <person name="Yuuki H."/>
            <person name="Oshima A."/>
            <person name="Sasaki N."/>
            <person name="Aotsuka S."/>
            <person name="Yoshikawa Y."/>
            <person name="Matsunawa H."/>
            <person name="Ichihara T."/>
            <person name="Shiohata N."/>
            <person name="Sano S."/>
            <person name="Moriya S."/>
            <person name="Momiyama H."/>
            <person name="Satoh N."/>
            <person name="Takami S."/>
            <person name="Terashima Y."/>
            <person name="Suzuki O."/>
            <person name="Nakagawa S."/>
            <person name="Senoh A."/>
            <person name="Mizoguchi H."/>
            <person name="Goto Y."/>
            <person name="Shimizu F."/>
            <person name="Wakebe H."/>
            <person name="Hishigaki H."/>
            <person name="Watanabe T."/>
            <person name="Sugiyama A."/>
            <person name="Takemoto M."/>
            <person name="Kawakami B."/>
            <person name="Yamazaki M."/>
            <person name="Watanabe K."/>
            <person name="Kumagai A."/>
            <person name="Itakura S."/>
            <person name="Fukuzumi Y."/>
            <person name="Fujimori Y."/>
            <person name="Komiyama M."/>
            <person name="Tashiro H."/>
            <person name="Tanigami A."/>
            <person name="Fujiwara T."/>
            <person name="Ono T."/>
            <person name="Yamada K."/>
            <person name="Fujii Y."/>
            <person name="Ozaki K."/>
            <person name="Hirao M."/>
            <person name="Ohmori Y."/>
            <person name="Kawabata A."/>
            <person name="Hikiji T."/>
            <person name="Kobatake N."/>
            <person name="Inagaki H."/>
            <person name="Ikema Y."/>
            <person name="Okamoto S."/>
            <person name="Okitani R."/>
            <person name="Kawakami T."/>
            <person name="Noguchi S."/>
            <person name="Itoh T."/>
            <person name="Shigeta K."/>
            <person name="Senba T."/>
            <person name="Matsumura K."/>
            <person name="Nakajima Y."/>
            <person name="Mizuno T."/>
            <person name="Morinaga M."/>
            <person name="Sasaki M."/>
            <person name="Togashi T."/>
            <person name="Oyama M."/>
            <person name="Hata H."/>
            <person name="Watanabe M."/>
            <person name="Komatsu T."/>
            <person name="Mizushima-Sugano J."/>
            <person name="Satoh T."/>
            <person name="Shirai Y."/>
            <person name="Takahashi Y."/>
            <person name="Nakagawa K."/>
            <person name="Okumura K."/>
            <person name="Nagase T."/>
            <person name="Nomura N."/>
            <person name="Kikuchi H."/>
            <person name="Masuho Y."/>
            <person name="Yamashita R."/>
            <person name="Nakai K."/>
            <person name="Yada T."/>
            <person name="Nakamura Y."/>
            <person name="Ohara O."/>
            <person name="Isogai T."/>
            <person name="Sugano S."/>
        </authorList>
    </citation>
    <scope>NUCLEOTIDE SEQUENCE [LARGE SCALE MRNA] (ISOFORMS 2; 3 AND 4)</scope>
    <scope>VARIANT LEU-22</scope>
    <source>
        <tissue>Testis</tissue>
    </source>
</reference>
<reference key="3">
    <citation type="journal article" date="2006" name="Nature">
        <title>Analysis of the DNA sequence and duplication history of human chromosome 15.</title>
        <authorList>
            <person name="Zody M.C."/>
            <person name="Garber M."/>
            <person name="Sharpe T."/>
            <person name="Young S.K."/>
            <person name="Rowen L."/>
            <person name="O'Neill K."/>
            <person name="Whittaker C.A."/>
            <person name="Kamal M."/>
            <person name="Chang J.L."/>
            <person name="Cuomo C.A."/>
            <person name="Dewar K."/>
            <person name="FitzGerald M.G."/>
            <person name="Kodira C.D."/>
            <person name="Madan A."/>
            <person name="Qin S."/>
            <person name="Yang X."/>
            <person name="Abbasi N."/>
            <person name="Abouelleil A."/>
            <person name="Arachchi H.M."/>
            <person name="Baradarani L."/>
            <person name="Birditt B."/>
            <person name="Bloom S."/>
            <person name="Bloom T."/>
            <person name="Borowsky M.L."/>
            <person name="Burke J."/>
            <person name="Butler J."/>
            <person name="Cook A."/>
            <person name="DeArellano K."/>
            <person name="DeCaprio D."/>
            <person name="Dorris L. III"/>
            <person name="Dors M."/>
            <person name="Eichler E.E."/>
            <person name="Engels R."/>
            <person name="Fahey J."/>
            <person name="Fleetwood P."/>
            <person name="Friedman C."/>
            <person name="Gearin G."/>
            <person name="Hall J.L."/>
            <person name="Hensley G."/>
            <person name="Johnson E."/>
            <person name="Jones C."/>
            <person name="Kamat A."/>
            <person name="Kaur A."/>
            <person name="Locke D.P."/>
            <person name="Madan A."/>
            <person name="Munson G."/>
            <person name="Jaffe D.B."/>
            <person name="Lui A."/>
            <person name="Macdonald P."/>
            <person name="Mauceli E."/>
            <person name="Naylor J.W."/>
            <person name="Nesbitt R."/>
            <person name="Nicol R."/>
            <person name="O'Leary S.B."/>
            <person name="Ratcliffe A."/>
            <person name="Rounsley S."/>
            <person name="She X."/>
            <person name="Sneddon K.M.B."/>
            <person name="Stewart S."/>
            <person name="Sougnez C."/>
            <person name="Stone S.M."/>
            <person name="Topham K."/>
            <person name="Vincent D."/>
            <person name="Wang S."/>
            <person name="Zimmer A.R."/>
            <person name="Birren B.W."/>
            <person name="Hood L."/>
            <person name="Lander E.S."/>
            <person name="Nusbaum C."/>
        </authorList>
    </citation>
    <scope>NUCLEOTIDE SEQUENCE [LARGE SCALE GENOMIC DNA]</scope>
    <scope>VARIANT LEU-22</scope>
</reference>
<reference key="4">
    <citation type="submission" date="2005-09" db="EMBL/GenBank/DDBJ databases">
        <authorList>
            <person name="Mural R.J."/>
            <person name="Istrail S."/>
            <person name="Sutton G.G."/>
            <person name="Florea L."/>
            <person name="Halpern A.L."/>
            <person name="Mobarry C.M."/>
            <person name="Lippert R."/>
            <person name="Walenz B."/>
            <person name="Shatkay H."/>
            <person name="Dew I."/>
            <person name="Miller J.R."/>
            <person name="Flanigan M.J."/>
            <person name="Edwards N.J."/>
            <person name="Bolanos R."/>
            <person name="Fasulo D."/>
            <person name="Halldorsson B.V."/>
            <person name="Hannenhalli S."/>
            <person name="Turner R."/>
            <person name="Yooseph S."/>
            <person name="Lu F."/>
            <person name="Nusskern D.R."/>
            <person name="Shue B.C."/>
            <person name="Zheng X.H."/>
            <person name="Zhong F."/>
            <person name="Delcher A.L."/>
            <person name="Huson D.H."/>
            <person name="Kravitz S.A."/>
            <person name="Mouchard L."/>
            <person name="Reinert K."/>
            <person name="Remington K.A."/>
            <person name="Clark A.G."/>
            <person name="Waterman M.S."/>
            <person name="Eichler E.E."/>
            <person name="Adams M.D."/>
            <person name="Hunkapiller M.W."/>
            <person name="Myers E.W."/>
            <person name="Venter J.C."/>
        </authorList>
    </citation>
    <scope>NUCLEOTIDE SEQUENCE [LARGE SCALE GENOMIC DNA]</scope>
</reference>
<reference key="5">
    <citation type="journal article" date="2004" name="Genome Res.">
        <title>The status, quality, and expansion of the NIH full-length cDNA project: the Mammalian Gene Collection (MGC).</title>
        <authorList>
            <consortium name="The MGC Project Team"/>
        </authorList>
    </citation>
    <scope>NUCLEOTIDE SEQUENCE [LARGE SCALE MRNA] (ISOFORM 1)</scope>
    <scope>VARIANT LEU-22</scope>
</reference>
<reference key="6">
    <citation type="journal article" date="2007" name="BMC Genomics">
        <title>The full-ORF clone resource of the German cDNA consortium.</title>
        <authorList>
            <person name="Bechtel S."/>
            <person name="Rosenfelder H."/>
            <person name="Duda A."/>
            <person name="Schmidt C.P."/>
            <person name="Ernst U."/>
            <person name="Wellenreuther R."/>
            <person name="Mehrle A."/>
            <person name="Schuster C."/>
            <person name="Bahr A."/>
            <person name="Bloecker H."/>
            <person name="Heubner D."/>
            <person name="Hoerlein A."/>
            <person name="Michel G."/>
            <person name="Wedler H."/>
            <person name="Koehrer K."/>
            <person name="Ottenwaelder B."/>
            <person name="Poustka A."/>
            <person name="Wiemann S."/>
            <person name="Schupp I."/>
        </authorList>
    </citation>
    <scope>NUCLEOTIDE SEQUENCE [LARGE SCALE MRNA] OF 890-1132 (ISOFORM 1)</scope>
    <source>
        <tissue>Testis</tissue>
    </source>
</reference>
<reference key="7">
    <citation type="journal article" date="2008" name="Oncogene">
        <title>BRD-NUT oncoproteins: a family of closely related nuclear proteins that block epithelial differentiation and maintain the growth of carcinoma cells.</title>
        <authorList>
            <person name="French C.A."/>
            <person name="Ramirez C.L."/>
            <person name="Kolmakova J."/>
            <person name="Hickman T.T."/>
            <person name="Cameron M.J."/>
            <person name="Thyne M.E."/>
            <person name="Kutok J.L."/>
            <person name="Toretsky J.A."/>
            <person name="Tadavarthy A.K."/>
            <person name="Kees U.R."/>
            <person name="Fletcher J.A."/>
            <person name="Aster J.C."/>
        </authorList>
    </citation>
    <scope>CHROMOSOMAL TRANSLOCATION WITH BRD3</scope>
    <scope>SUBCELLULAR LOCATION</scope>
    <scope>PHOSPHORYLATION AT SER-1026; SER-1029 AND SER-1031</scope>
</reference>
<reference key="8">
    <citation type="journal article" date="2016" name="J. Biol. Chem.">
        <title>Substrate specificity of the HEMK2 protein glutamine methyltransferase and identification of novel substrates.</title>
        <authorList>
            <person name="Kusevic D."/>
            <person name="Kudithipudi S."/>
            <person name="Jeltsch A."/>
        </authorList>
    </citation>
    <scope>METHYLATION AT GLN-1046</scope>
    <scope>MUTAGENESIS OF GLN-1046</scope>
</reference>
<reference key="9">
    <citation type="journal article" date="2019" name="Cancer Sci.">
        <title>Identification of genes involved in the regulation of TERT in hepatocellular carcinoma.</title>
        <authorList>
            <person name="Amisaki M."/>
            <person name="Tsuchiya H."/>
            <person name="Sakabe T."/>
            <person name="Fujiwara Y."/>
            <person name="Shiota G."/>
        </authorList>
    </citation>
    <scope>FUNCTION</scope>
</reference>
<comment type="function">
    <text evidence="8">Plays a role in the regulation of proliferation. Regulates TERT expression by modulating SP1 binding to TERT promoter binding sites.</text>
</comment>
<comment type="interaction">
    <interactant intactId="EBI-10178410">
        <id>Q86Y26</id>
    </interactant>
    <interactant intactId="EBI-79934">
        <id>P09917</id>
        <label>ALOX5</label>
    </interactant>
    <organismsDiffer>false</organismsDiffer>
    <experiments>4</experiments>
</comment>
<comment type="interaction">
    <interactant intactId="EBI-10178410">
        <id>Q86Y26</id>
    </interactant>
    <interactant intactId="EBI-10175300">
        <id>Q8TD31-3</id>
        <label>CCHCR1</label>
    </interactant>
    <organismsDiffer>false</organismsDiffer>
    <experiments>3</experiments>
</comment>
<comment type="interaction">
    <interactant intactId="EBI-10178410">
        <id>Q86Y26</id>
    </interactant>
    <interactant intactId="EBI-719941">
        <id>Q3B820</id>
        <label>FAM161A</label>
    </interactant>
    <organismsDiffer>false</organismsDiffer>
    <experiments>3</experiments>
</comment>
<comment type="interaction">
    <interactant intactId="EBI-10178410">
        <id>Q86Y26</id>
    </interactant>
    <interactant intactId="EBI-720457">
        <id>Q96EW2</id>
        <label>HSPBAP1</label>
    </interactant>
    <organismsDiffer>false</organismsDiffer>
    <experiments>3</experiments>
</comment>
<comment type="interaction">
    <interactant intactId="EBI-10178410">
        <id>Q86Y26</id>
    </interactant>
    <interactant intactId="EBI-746217">
        <id>Q8IZ03</id>
        <label>IFIT2</label>
    </interactant>
    <organismsDiffer>false</organismsDiffer>
    <experiments>3</experiments>
</comment>
<comment type="interaction">
    <interactant intactId="EBI-10178410">
        <id>Q86Y26</id>
    </interactant>
    <interactant intactId="EBI-740244">
        <id>Q7Z3B3</id>
        <label>KANSL1</label>
    </interactant>
    <organismsDiffer>false</organismsDiffer>
    <experiments>3</experiments>
</comment>
<comment type="interaction">
    <interactant intactId="EBI-10178410">
        <id>Q86Y26</id>
    </interactant>
    <interactant intactId="EBI-349938">
        <id>P52292</id>
        <label>KPNA2</label>
    </interactant>
    <organismsDiffer>false</organismsDiffer>
    <experiments>3</experiments>
</comment>
<comment type="interaction">
    <interactant intactId="EBI-10178410">
        <id>Q86Y26</id>
    </interactant>
    <interactant intactId="EBI-8474075">
        <id>Q68G74</id>
        <label>LHX8</label>
    </interactant>
    <organismsDiffer>false</organismsDiffer>
    <experiments>3</experiments>
</comment>
<comment type="interaction">
    <interactant intactId="EBI-10178410">
        <id>Q86Y26</id>
    </interactant>
    <interactant intactId="EBI-8639312">
        <id>P25800</id>
        <label>LMO1</label>
    </interactant>
    <organismsDiffer>false</organismsDiffer>
    <experiments>3</experiments>
</comment>
<comment type="interaction">
    <interactant intactId="EBI-10178410">
        <id>Q86Y26</id>
    </interactant>
    <interactant intactId="EBI-739696">
        <id>P25791</id>
        <label>LMO2</label>
    </interactant>
    <organismsDiffer>false</organismsDiffer>
    <experiments>3</experiments>
</comment>
<comment type="interaction">
    <interactant intactId="EBI-10178410">
        <id>Q86Y26</id>
    </interactant>
    <interactant intactId="EBI-742259">
        <id>Q8TAP4</id>
        <label>LMO3</label>
    </interactant>
    <organismsDiffer>false</organismsDiffer>
    <experiments>3</experiments>
</comment>
<comment type="interaction">
    <interactant intactId="EBI-10178410">
        <id>Q86Y26</id>
    </interactant>
    <interactant intactId="EBI-10269566">
        <id>Q8NDC4</id>
        <label>MORN4</label>
    </interactant>
    <organismsDiffer>false</organismsDiffer>
    <experiments>3</experiments>
</comment>
<comment type="interaction">
    <interactant intactId="EBI-10178410">
        <id>Q86Y26</id>
    </interactant>
    <interactant intactId="EBI-2880203">
        <id>O76041</id>
        <label>NEBL</label>
    </interactant>
    <organismsDiffer>false</organismsDiffer>
    <experiments>3</experiments>
</comment>
<comment type="interaction">
    <interactant intactId="EBI-10178410">
        <id>Q86Y26</id>
    </interactant>
    <interactant intactId="EBI-10181968">
        <id>Q7Z4N8</id>
        <label>P4HA3</label>
    </interactant>
    <organismsDiffer>false</organismsDiffer>
    <experiments>4</experiments>
</comment>
<comment type="interaction">
    <interactant intactId="EBI-10178410">
        <id>Q86Y26</id>
    </interactant>
    <interactant intactId="EBI-1383852">
        <id>P54646</id>
        <label>PRKAA2</label>
    </interactant>
    <organismsDiffer>false</organismsDiffer>
    <experiments>3</experiments>
</comment>
<comment type="interaction">
    <interactant intactId="EBI-10178410">
        <id>Q86Y26</id>
    </interactant>
    <interactant intactId="EBI-1236916">
        <id>Q14997</id>
        <label>PSME4</label>
    </interactant>
    <organismsDiffer>false</organismsDiffer>
    <experiments>3</experiments>
</comment>
<comment type="interaction">
    <interactant intactId="EBI-10178410">
        <id>Q86Y26</id>
    </interactant>
    <interactant intactId="EBI-9091816">
        <id>Q9NPQ8-4</id>
        <label>RIC8A</label>
    </interactant>
    <organismsDiffer>false</organismsDiffer>
    <experiments>3</experiments>
</comment>
<comment type="interaction">
    <interactant intactId="EBI-10178410">
        <id>Q86Y26</id>
    </interactant>
    <interactant intactId="EBI-1047497">
        <id>Q9UPU9</id>
        <label>SAMD4A</label>
    </interactant>
    <organismsDiffer>false</organismsDiffer>
    <experiments>3</experiments>
</comment>
<comment type="interaction">
    <interactant intactId="EBI-10178410">
        <id>Q86Y26</id>
    </interactant>
    <interactant intactId="EBI-747035">
        <id>Q9H788</id>
        <label>SH2D4A</label>
    </interactant>
    <organismsDiffer>false</organismsDiffer>
    <experiments>3</experiments>
</comment>
<comment type="interaction">
    <interactant intactId="EBI-10178410">
        <id>Q86Y26</id>
    </interactant>
    <interactant intactId="EBI-10175039">
        <id>Q13625-3</id>
        <label>TP53BP2</label>
    </interactant>
    <organismsDiffer>false</organismsDiffer>
    <experiments>3</experiments>
</comment>
<comment type="interaction">
    <interactant intactId="EBI-10178410">
        <id>Q86Y26</id>
    </interactant>
    <interactant intactId="EBI-747061">
        <id>O75800</id>
        <label>ZMYND10</label>
    </interactant>
    <organismsDiffer>false</organismsDiffer>
    <experiments>3</experiments>
</comment>
<comment type="interaction">
    <interactant intactId="EBI-10178410">
        <id>Q86Y26</id>
    </interactant>
    <interactant intactId="EBI-10192794">
        <id>Q8WWA6</id>
        <label>ZNF277</label>
    </interactant>
    <organismsDiffer>false</organismsDiffer>
    <experiments>3</experiments>
</comment>
<comment type="interaction">
    <interactant intactId="EBI-10178410">
        <id>Q86Y26</id>
    </interactant>
    <interactant intactId="EBI-10307415">
        <id>Q9H641</id>
    </interactant>
    <organismsDiffer>false</organismsDiffer>
    <experiments>3</experiments>
</comment>
<comment type="interaction">
    <interactant intactId="EBI-10178410">
        <id>Q86Y26</id>
    </interactant>
    <interactant intactId="EBI-25475874">
        <id>PRO_0000449626</id>
        <label>rep</label>
        <dbReference type="UniProtKB" id="P0DTD1"/>
    </interactant>
    <organismsDiffer>true</organismsDiffer>
    <experiments>3</experiments>
</comment>
<comment type="subcellular location">
    <subcellularLocation>
        <location evidence="6">Cytoplasm</location>
    </subcellularLocation>
    <subcellularLocation>
        <location evidence="6">Nucleus</location>
    </subcellularLocation>
    <text evidence="6">Shuttles between nucleus and cytoplasm.</text>
</comment>
<comment type="alternative products">
    <event type="alternative splicing"/>
    <isoform>
        <id>Q86Y26-1</id>
        <name>1</name>
        <sequence type="displayed"/>
    </isoform>
    <isoform>
        <id>Q86Y26-2</id>
        <name>2</name>
        <sequence type="described" ref="VSP_029559 VSP_029560 VSP_029561"/>
    </isoform>
    <isoform>
        <id>Q86Y26-3</id>
        <name>3</name>
        <sequence type="described" ref="VSP_055644"/>
    </isoform>
    <isoform>
        <id>Q86Y26-4</id>
        <name>4</name>
        <sequence type="described" ref="VSP_055645"/>
    </isoform>
</comment>
<comment type="tissue specificity">
    <text evidence="2">Specifically expressed in testis.</text>
</comment>
<comment type="PTM">
    <text evidence="7">Methylated at Gln-1046 by N6AMT1.</text>
</comment>
<comment type="PTM">
    <text evidence="6">Phosphorylation on Ser-1026, Ser-1029 or Ser-1031 is important for cytoplasmic export.</text>
</comment>
<comment type="disease">
    <text evidence="2">A chromosomal aberration involving NUTM1 is found in a rare, aggressive, and lethal carcinoma arising in midline organs of young people. Translocation t(15;19)(q14;p13) with BRD4 which produces a BRD4-NUTM1 fusion protein.</text>
</comment>
<comment type="disease">
    <text evidence="2">A chromosomal aberration involving NUTM1 is found in a rare, aggressive, and lethal carcinoma arising in midline organs of young people. Translocation t(15;9)(q14;q34) with BRD3 which produces a BRD3-NUTM1 fusion protein.</text>
</comment>
<comment type="similarity">
    <text evidence="10">Belongs to the NUT family.</text>
</comment>
<comment type="sequence caution" evidence="10">
    <conflict type="erroneous initiation">
        <sequence resource="EMBL-CDS" id="AAO22237"/>
    </conflict>
    <text>Extended N-terminus.</text>
</comment>
<comment type="online information" name="Atlas of Genetics and Cytogenetics in Oncology and Haematology">
    <link uri="https://atlasgeneticsoncology.org/gene/41595/NUT"/>
</comment>
<feature type="chain" id="PRO_0000311394" description="NUT family member 1">
    <location>
        <begin position="1"/>
        <end position="1132"/>
    </location>
</feature>
<feature type="region of interest" description="Disordered" evidence="1">
    <location>
        <begin position="1"/>
        <end position="56"/>
    </location>
</feature>
<feature type="region of interest" description="Disordered" evidence="1">
    <location>
        <begin position="337"/>
        <end position="365"/>
    </location>
</feature>
<feature type="region of interest" description="Disordered" evidence="1">
    <location>
        <begin position="383"/>
        <end position="405"/>
    </location>
</feature>
<feature type="region of interest" description="Disordered" evidence="1">
    <location>
        <begin position="476"/>
        <end position="584"/>
    </location>
</feature>
<feature type="region of interest" description="Disordered" evidence="1">
    <location>
        <begin position="693"/>
        <end position="714"/>
    </location>
</feature>
<feature type="region of interest" description="Disordered" evidence="1">
    <location>
        <begin position="873"/>
        <end position="892"/>
    </location>
</feature>
<feature type="region of interest" description="Disordered" evidence="1">
    <location>
        <begin position="922"/>
        <end position="1017"/>
    </location>
</feature>
<feature type="region of interest" description="Disordered" evidence="1">
    <location>
        <begin position="1031"/>
        <end position="1132"/>
    </location>
</feature>
<feature type="compositionally biased region" description="Pro residues" evidence="1">
    <location>
        <begin position="21"/>
        <end position="36"/>
    </location>
</feature>
<feature type="compositionally biased region" description="Basic residues" evidence="1">
    <location>
        <begin position="337"/>
        <end position="352"/>
    </location>
</feature>
<feature type="compositionally biased region" description="Acidic residues" evidence="1">
    <location>
        <begin position="395"/>
        <end position="404"/>
    </location>
</feature>
<feature type="compositionally biased region" description="Polar residues" evidence="1">
    <location>
        <begin position="487"/>
        <end position="497"/>
    </location>
</feature>
<feature type="compositionally biased region" description="Polar residues" evidence="1">
    <location>
        <begin position="697"/>
        <end position="706"/>
    </location>
</feature>
<feature type="compositionally biased region" description="Polar residues" evidence="1">
    <location>
        <begin position="883"/>
        <end position="892"/>
    </location>
</feature>
<feature type="compositionally biased region" description="Basic and acidic residues" evidence="1">
    <location>
        <begin position="932"/>
        <end position="942"/>
    </location>
</feature>
<feature type="compositionally biased region" description="Polar residues" evidence="1">
    <location>
        <begin position="950"/>
        <end position="971"/>
    </location>
</feature>
<feature type="compositionally biased region" description="Basic residues" evidence="1">
    <location>
        <begin position="1123"/>
        <end position="1132"/>
    </location>
</feature>
<feature type="site" description="Breakpoint for translocation to form BRD4-NUTM1 and BRD3-NUTM1 fusion proteins">
    <location>
        <begin position="5"/>
        <end position="6"/>
    </location>
</feature>
<feature type="modified residue" description="Phosphoserine" evidence="11">
    <location>
        <position position="1026"/>
    </location>
</feature>
<feature type="modified residue" description="Phosphoserine" evidence="11">
    <location>
        <position position="1029"/>
    </location>
</feature>
<feature type="modified residue" description="Phosphoserine" evidence="11">
    <location>
        <position position="1031"/>
    </location>
</feature>
<feature type="modified residue" description="N5-methylglutamine" evidence="7">
    <location>
        <position position="1046"/>
    </location>
</feature>
<feature type="splice variant" id="VSP_055644" description="In isoform 3." evidence="9">
    <original>MASD</original>
    <variation>MFQRSNQDLKLGPYRKFSALSY</variation>
    <location>
        <begin position="1"/>
        <end position="4"/>
    </location>
</feature>
<feature type="splice variant" id="VSP_055645" description="In isoform 4." evidence="9">
    <original>M</original>
    <variation>MVVTLGPGPDCLILEASRQPQLVPKPERM</variation>
    <location>
        <position position="1"/>
    </location>
</feature>
<feature type="splice variant" id="VSP_029559" description="In isoform 2." evidence="9">
    <location>
        <begin position="235"/>
        <end position="365"/>
    </location>
</feature>
<feature type="splice variant" id="VSP_029560" description="In isoform 2." evidence="9">
    <original>LQPELAAPQ</original>
    <variation>PPTNGESQC</variation>
    <location>
        <begin position="565"/>
        <end position="573"/>
    </location>
</feature>
<feature type="splice variant" id="VSP_029561" description="In isoform 2." evidence="9">
    <location>
        <begin position="574"/>
        <end position="1132"/>
    </location>
</feature>
<feature type="sequence variant" id="VAR_037239" description="In dbSNP:rs374230." evidence="2 3 4 5">
    <original>P</original>
    <variation>L</variation>
    <location>
        <position position="22"/>
    </location>
</feature>
<feature type="sequence variant" id="VAR_037240" description="In dbSNP:rs16959028.">
    <original>T</original>
    <variation>M</variation>
    <location>
        <position position="781"/>
    </location>
</feature>
<feature type="sequence variant" id="VAR_037241" description="In dbSNP:rs17236868.">
    <original>V</original>
    <variation>E</variation>
    <location>
        <position position="785"/>
    </location>
</feature>
<feature type="sequence variant" id="VAR_037242" description="In dbSNP:rs2279683.">
    <original>T</original>
    <variation>N</variation>
    <location>
        <position position="973"/>
    </location>
</feature>
<feature type="sequence variant" id="VAR_037243" description="In dbSNP:rs2279684.">
    <original>P</original>
    <variation>R</variation>
    <location>
        <position position="985"/>
    </location>
</feature>
<feature type="sequence variant" id="VAR_037244" description="In dbSNP:rs2279685.">
    <original>R</original>
    <variation>H</variation>
    <location>
        <position position="1113"/>
    </location>
</feature>
<feature type="mutagenesis site" description="Abolishes methylation by N6AMT1." evidence="7">
    <original>Q</original>
    <variation>R</variation>
    <location>
        <position position="1046"/>
    </location>
</feature>
<feature type="sequence conflict" description="In Ref. 2; BAG63912." evidence="10" ref="2">
    <original>Y</original>
    <variation>H</variation>
    <location>
        <position position="332"/>
    </location>
</feature>
<feature type="helix" evidence="14">
    <location>
        <begin position="410"/>
        <end position="413"/>
    </location>
</feature>
<feature type="turn" evidence="13">
    <location>
        <begin position="420"/>
        <end position="422"/>
    </location>
</feature>
<feature type="helix" evidence="13">
    <location>
        <begin position="434"/>
        <end position="440"/>
    </location>
</feature>
<feature type="helix" evidence="13">
    <location>
        <begin position="448"/>
        <end position="458"/>
    </location>
</feature>
<feature type="strand" evidence="13">
    <location>
        <begin position="461"/>
        <end position="464"/>
    </location>
</feature>
<evidence type="ECO:0000256" key="1">
    <source>
        <dbReference type="SAM" id="MobiDB-lite"/>
    </source>
</evidence>
<evidence type="ECO:0000269" key="2">
    <source>
    </source>
</evidence>
<evidence type="ECO:0000269" key="3">
    <source>
    </source>
</evidence>
<evidence type="ECO:0000269" key="4">
    <source>
    </source>
</evidence>
<evidence type="ECO:0000269" key="5">
    <source>
    </source>
</evidence>
<evidence type="ECO:0000269" key="6">
    <source>
    </source>
</evidence>
<evidence type="ECO:0000269" key="7">
    <source>
    </source>
</evidence>
<evidence type="ECO:0000269" key="8">
    <source>
    </source>
</evidence>
<evidence type="ECO:0000303" key="9">
    <source>
    </source>
</evidence>
<evidence type="ECO:0000305" key="10"/>
<evidence type="ECO:0000305" key="11">
    <source>
    </source>
</evidence>
<evidence type="ECO:0000312" key="12">
    <source>
        <dbReference type="HGNC" id="HGNC:29919"/>
    </source>
</evidence>
<evidence type="ECO:0007829" key="13">
    <source>
        <dbReference type="PDB" id="7XEZ"/>
    </source>
</evidence>
<evidence type="ECO:0007829" key="14">
    <source>
        <dbReference type="PDB" id="7XFG"/>
    </source>
</evidence>